<gene>
    <name evidence="1" type="primary">prs</name>
    <name type="ordered locus">BH0066</name>
</gene>
<dbReference type="EC" id="2.7.6.1" evidence="1"/>
<dbReference type="EMBL" id="BA000004">
    <property type="protein sequence ID" value="BAB03785.1"/>
    <property type="molecule type" value="Genomic_DNA"/>
</dbReference>
<dbReference type="PIR" id="B83658">
    <property type="entry name" value="B83658"/>
</dbReference>
<dbReference type="RefSeq" id="WP_010896250.1">
    <property type="nucleotide sequence ID" value="NC_002570.2"/>
</dbReference>
<dbReference type="SMR" id="Q9KGJ5"/>
<dbReference type="STRING" id="272558.gene:10725888"/>
<dbReference type="GeneID" id="87595589"/>
<dbReference type="KEGG" id="bha:BH0066"/>
<dbReference type="eggNOG" id="COG0462">
    <property type="taxonomic scope" value="Bacteria"/>
</dbReference>
<dbReference type="HOGENOM" id="CLU_033546_4_0_9"/>
<dbReference type="OrthoDB" id="9777067at2"/>
<dbReference type="UniPathway" id="UPA00087">
    <property type="reaction ID" value="UER00172"/>
</dbReference>
<dbReference type="Proteomes" id="UP000001258">
    <property type="component" value="Chromosome"/>
</dbReference>
<dbReference type="GO" id="GO:0005737">
    <property type="term" value="C:cytoplasm"/>
    <property type="evidence" value="ECO:0007669"/>
    <property type="project" value="UniProtKB-SubCell"/>
</dbReference>
<dbReference type="GO" id="GO:0002189">
    <property type="term" value="C:ribose phosphate diphosphokinase complex"/>
    <property type="evidence" value="ECO:0007669"/>
    <property type="project" value="TreeGrafter"/>
</dbReference>
<dbReference type="GO" id="GO:0005524">
    <property type="term" value="F:ATP binding"/>
    <property type="evidence" value="ECO:0007669"/>
    <property type="project" value="UniProtKB-KW"/>
</dbReference>
<dbReference type="GO" id="GO:0016301">
    <property type="term" value="F:kinase activity"/>
    <property type="evidence" value="ECO:0007669"/>
    <property type="project" value="UniProtKB-KW"/>
</dbReference>
<dbReference type="GO" id="GO:0000287">
    <property type="term" value="F:magnesium ion binding"/>
    <property type="evidence" value="ECO:0007669"/>
    <property type="project" value="UniProtKB-UniRule"/>
</dbReference>
<dbReference type="GO" id="GO:0004749">
    <property type="term" value="F:ribose phosphate diphosphokinase activity"/>
    <property type="evidence" value="ECO:0007669"/>
    <property type="project" value="UniProtKB-UniRule"/>
</dbReference>
<dbReference type="GO" id="GO:0006015">
    <property type="term" value="P:5-phosphoribose 1-diphosphate biosynthetic process"/>
    <property type="evidence" value="ECO:0007669"/>
    <property type="project" value="UniProtKB-UniRule"/>
</dbReference>
<dbReference type="GO" id="GO:0006164">
    <property type="term" value="P:purine nucleotide biosynthetic process"/>
    <property type="evidence" value="ECO:0007669"/>
    <property type="project" value="TreeGrafter"/>
</dbReference>
<dbReference type="GO" id="GO:0009156">
    <property type="term" value="P:ribonucleoside monophosphate biosynthetic process"/>
    <property type="evidence" value="ECO:0007669"/>
    <property type="project" value="InterPro"/>
</dbReference>
<dbReference type="CDD" id="cd06223">
    <property type="entry name" value="PRTases_typeI"/>
    <property type="match status" value="1"/>
</dbReference>
<dbReference type="FunFam" id="3.40.50.2020:FF:000001">
    <property type="entry name" value="Ribose-phosphate pyrophosphokinase"/>
    <property type="match status" value="1"/>
</dbReference>
<dbReference type="Gene3D" id="3.40.50.2020">
    <property type="match status" value="2"/>
</dbReference>
<dbReference type="HAMAP" id="MF_00583_B">
    <property type="entry name" value="RibP_PPkinase_B"/>
    <property type="match status" value="1"/>
</dbReference>
<dbReference type="InterPro" id="IPR000842">
    <property type="entry name" value="PRib_PP_synth_CS"/>
</dbReference>
<dbReference type="InterPro" id="IPR029099">
    <property type="entry name" value="Pribosyltran_N"/>
</dbReference>
<dbReference type="InterPro" id="IPR000836">
    <property type="entry name" value="PRibTrfase_dom"/>
</dbReference>
<dbReference type="InterPro" id="IPR029057">
    <property type="entry name" value="PRTase-like"/>
</dbReference>
<dbReference type="InterPro" id="IPR005946">
    <property type="entry name" value="Rib-P_diPkinase"/>
</dbReference>
<dbReference type="InterPro" id="IPR037515">
    <property type="entry name" value="Rib-P_diPkinase_bac"/>
</dbReference>
<dbReference type="NCBIfam" id="NF002320">
    <property type="entry name" value="PRK01259.1"/>
    <property type="match status" value="1"/>
</dbReference>
<dbReference type="NCBIfam" id="NF002618">
    <property type="entry name" value="PRK02269.1"/>
    <property type="match status" value="1"/>
</dbReference>
<dbReference type="NCBIfam" id="TIGR01251">
    <property type="entry name" value="ribP_PPkin"/>
    <property type="match status" value="1"/>
</dbReference>
<dbReference type="PANTHER" id="PTHR10210">
    <property type="entry name" value="RIBOSE-PHOSPHATE DIPHOSPHOKINASE FAMILY MEMBER"/>
    <property type="match status" value="1"/>
</dbReference>
<dbReference type="PANTHER" id="PTHR10210:SF41">
    <property type="entry name" value="RIBOSE-PHOSPHATE PYROPHOSPHOKINASE 1, CHLOROPLASTIC"/>
    <property type="match status" value="1"/>
</dbReference>
<dbReference type="Pfam" id="PF14572">
    <property type="entry name" value="Pribosyl_synth"/>
    <property type="match status" value="1"/>
</dbReference>
<dbReference type="Pfam" id="PF13793">
    <property type="entry name" value="Pribosyltran_N"/>
    <property type="match status" value="1"/>
</dbReference>
<dbReference type="SMART" id="SM01400">
    <property type="entry name" value="Pribosyltran_N"/>
    <property type="match status" value="1"/>
</dbReference>
<dbReference type="SUPFAM" id="SSF53271">
    <property type="entry name" value="PRTase-like"/>
    <property type="match status" value="1"/>
</dbReference>
<dbReference type="PROSITE" id="PS00114">
    <property type="entry name" value="PRPP_SYNTHASE"/>
    <property type="match status" value="1"/>
</dbReference>
<protein>
    <recommendedName>
        <fullName evidence="1">Ribose-phosphate pyrophosphokinase</fullName>
        <shortName evidence="1">RPPK</shortName>
        <ecNumber evidence="1">2.7.6.1</ecNumber>
    </recommendedName>
    <alternativeName>
        <fullName evidence="1">5-phospho-D-ribosyl alpha-1-diphosphate synthase</fullName>
    </alternativeName>
    <alternativeName>
        <fullName evidence="1">Phosphoribosyl diphosphate synthase</fullName>
    </alternativeName>
    <alternativeName>
        <fullName evidence="1">Phosphoribosyl pyrophosphate synthase</fullName>
        <shortName evidence="1">P-Rib-PP synthase</shortName>
        <shortName evidence="1">PRPP synthase</shortName>
        <shortName evidence="1">PRPPase</shortName>
    </alternativeName>
</protein>
<proteinExistence type="inferred from homology"/>
<comment type="function">
    <text evidence="1">Involved in the biosynthesis of the central metabolite phospho-alpha-D-ribosyl-1-pyrophosphate (PRPP) via the transfer of pyrophosphoryl group from ATP to 1-hydroxyl of ribose-5-phosphate (Rib-5-P).</text>
</comment>
<comment type="catalytic activity">
    <reaction evidence="1">
        <text>D-ribose 5-phosphate + ATP = 5-phospho-alpha-D-ribose 1-diphosphate + AMP + H(+)</text>
        <dbReference type="Rhea" id="RHEA:15609"/>
        <dbReference type="ChEBI" id="CHEBI:15378"/>
        <dbReference type="ChEBI" id="CHEBI:30616"/>
        <dbReference type="ChEBI" id="CHEBI:58017"/>
        <dbReference type="ChEBI" id="CHEBI:78346"/>
        <dbReference type="ChEBI" id="CHEBI:456215"/>
        <dbReference type="EC" id="2.7.6.1"/>
    </reaction>
</comment>
<comment type="cofactor">
    <cofactor evidence="1">
        <name>Mg(2+)</name>
        <dbReference type="ChEBI" id="CHEBI:18420"/>
    </cofactor>
    <text evidence="1">Binds 2 Mg(2+) ions per subunit.</text>
</comment>
<comment type="pathway">
    <text evidence="1">Metabolic intermediate biosynthesis; 5-phospho-alpha-D-ribose 1-diphosphate biosynthesis; 5-phospho-alpha-D-ribose 1-diphosphate from D-ribose 5-phosphate (route I): step 1/1.</text>
</comment>
<comment type="subunit">
    <text evidence="1">Homohexamer.</text>
</comment>
<comment type="subcellular location">
    <subcellularLocation>
        <location evidence="1">Cytoplasm</location>
    </subcellularLocation>
</comment>
<comment type="similarity">
    <text evidence="1">Belongs to the ribose-phosphate pyrophosphokinase family. Class I subfamily.</text>
</comment>
<keyword id="KW-0067">ATP-binding</keyword>
<keyword id="KW-0963">Cytoplasm</keyword>
<keyword id="KW-0418">Kinase</keyword>
<keyword id="KW-0460">Magnesium</keyword>
<keyword id="KW-0479">Metal-binding</keyword>
<keyword id="KW-0545">Nucleotide biosynthesis</keyword>
<keyword id="KW-0547">Nucleotide-binding</keyword>
<keyword id="KW-1185">Reference proteome</keyword>
<keyword id="KW-0808">Transferase</keyword>
<name>KPRS_HALH5</name>
<reference key="1">
    <citation type="journal article" date="2000" name="Nucleic Acids Res.">
        <title>Complete genome sequence of the alkaliphilic bacterium Bacillus halodurans and genomic sequence comparison with Bacillus subtilis.</title>
        <authorList>
            <person name="Takami H."/>
            <person name="Nakasone K."/>
            <person name="Takaki Y."/>
            <person name="Maeno G."/>
            <person name="Sasaki R."/>
            <person name="Masui N."/>
            <person name="Fuji F."/>
            <person name="Hirama C."/>
            <person name="Nakamura Y."/>
            <person name="Ogasawara N."/>
            <person name="Kuhara S."/>
            <person name="Horikoshi K."/>
        </authorList>
    </citation>
    <scope>NUCLEOTIDE SEQUENCE [LARGE SCALE GENOMIC DNA]</scope>
    <source>
        <strain>ATCC BAA-125 / DSM 18197 / FERM 7344 / JCM 9153 / C-125</strain>
    </source>
</reference>
<organism>
    <name type="scientific">Halalkalibacterium halodurans (strain ATCC BAA-125 / DSM 18197 / FERM 7344 / JCM 9153 / C-125)</name>
    <name type="common">Bacillus halodurans</name>
    <dbReference type="NCBI Taxonomy" id="272558"/>
    <lineage>
        <taxon>Bacteria</taxon>
        <taxon>Bacillati</taxon>
        <taxon>Bacillota</taxon>
        <taxon>Bacilli</taxon>
        <taxon>Bacillales</taxon>
        <taxon>Bacillaceae</taxon>
        <taxon>Halalkalibacterium (ex Joshi et al. 2022)</taxon>
    </lineage>
</organism>
<feature type="chain" id="PRO_0000141109" description="Ribose-phosphate pyrophosphokinase">
    <location>
        <begin position="1"/>
        <end position="316"/>
    </location>
</feature>
<feature type="active site" evidence="1">
    <location>
        <position position="197"/>
    </location>
</feature>
<feature type="binding site" evidence="1">
    <location>
        <begin position="42"/>
        <end position="44"/>
    </location>
    <ligand>
        <name>ATP</name>
        <dbReference type="ChEBI" id="CHEBI:30616"/>
    </ligand>
</feature>
<feature type="binding site" evidence="1">
    <location>
        <begin position="101"/>
        <end position="102"/>
    </location>
    <ligand>
        <name>ATP</name>
        <dbReference type="ChEBI" id="CHEBI:30616"/>
    </ligand>
</feature>
<feature type="binding site" evidence="1">
    <location>
        <position position="135"/>
    </location>
    <ligand>
        <name>Mg(2+)</name>
        <dbReference type="ChEBI" id="CHEBI:18420"/>
        <label>1</label>
    </ligand>
</feature>
<feature type="binding site" evidence="1">
    <location>
        <position position="174"/>
    </location>
    <ligand>
        <name>Mg(2+)</name>
        <dbReference type="ChEBI" id="CHEBI:18420"/>
        <label>2</label>
    </ligand>
</feature>
<feature type="binding site" evidence="1">
    <location>
        <position position="199"/>
    </location>
    <ligand>
        <name>D-ribose 5-phosphate</name>
        <dbReference type="ChEBI" id="CHEBI:78346"/>
    </ligand>
</feature>
<feature type="binding site" evidence="1">
    <location>
        <position position="223"/>
    </location>
    <ligand>
        <name>D-ribose 5-phosphate</name>
        <dbReference type="ChEBI" id="CHEBI:78346"/>
    </ligand>
</feature>
<feature type="binding site" evidence="1">
    <location>
        <begin position="227"/>
        <end position="231"/>
    </location>
    <ligand>
        <name>D-ribose 5-phosphate</name>
        <dbReference type="ChEBI" id="CHEBI:78346"/>
    </ligand>
</feature>
<sequence>MANYGDPNLKVFTLNSNKGLAYEITERIGVPMGKSSVTRFSDGEVQINIEESIRGCDVFLIQSTAAPANEHIMELLIMIDAVKRASAKTINVVIPYYGYARQDRKARAREPITAKLVANLLETAGATRVLTLDLHATQIQGFFDIPVDQLMGVPILAEFFEKKGLDDVVVVSPDHGGVVRARKLADRLKAPIAIIDKRRPKPNVAEVMNIVGHIEGKTAIIIDDIIDTAGTITLAANALVEHGAKEVYACCTHPVLSGPAIERIKNSKIKELVVMNTIELEEEKLIDKITTLSVAPLMAEAIVRVHEHSSVSLLFD</sequence>
<evidence type="ECO:0000255" key="1">
    <source>
        <dbReference type="HAMAP-Rule" id="MF_00583"/>
    </source>
</evidence>
<accession>Q9KGJ5</accession>